<gene>
    <name type="ordered locus">At3g23325</name>
    <name type="ORF">MLM24.5</name>
</gene>
<keyword id="KW-1185">Reference proteome</keyword>
<name>SF3BA_ARATH</name>
<dbReference type="EMBL" id="AB015474">
    <property type="protein sequence ID" value="BAB02276.1"/>
    <property type="molecule type" value="Genomic_DNA"/>
</dbReference>
<dbReference type="EMBL" id="CP002686">
    <property type="protein sequence ID" value="AEE76752.1"/>
    <property type="molecule type" value="Genomic_DNA"/>
</dbReference>
<dbReference type="EMBL" id="AY063990">
    <property type="protein sequence ID" value="AAL36346.1"/>
    <property type="molecule type" value="mRNA"/>
</dbReference>
<dbReference type="EMBL" id="AY096688">
    <property type="protein sequence ID" value="AAM20322.1"/>
    <property type="molecule type" value="mRNA"/>
</dbReference>
<dbReference type="RefSeq" id="NP_566727.1">
    <property type="nucleotide sequence ID" value="NM_113235.3"/>
</dbReference>
<dbReference type="SMR" id="Q9LW64"/>
<dbReference type="BioGRID" id="7245">
    <property type="interactions" value="22"/>
</dbReference>
<dbReference type="FunCoup" id="Q9LW64">
    <property type="interactions" value="2654"/>
</dbReference>
<dbReference type="IntAct" id="Q9LW64">
    <property type="interactions" value="1"/>
</dbReference>
<dbReference type="STRING" id="3702.Q9LW64"/>
<dbReference type="iPTMnet" id="Q9LW64"/>
<dbReference type="PaxDb" id="3702-AT3G23325.1"/>
<dbReference type="ProteomicsDB" id="232579"/>
<dbReference type="DNASU" id="821913"/>
<dbReference type="EnsemblPlants" id="AT3G23325.1">
    <property type="protein sequence ID" value="AT3G23325.1"/>
    <property type="gene ID" value="AT3G23325"/>
</dbReference>
<dbReference type="GeneID" id="821913"/>
<dbReference type="Gramene" id="AT3G23325.1">
    <property type="protein sequence ID" value="AT3G23325.1"/>
    <property type="gene ID" value="AT3G23325"/>
</dbReference>
<dbReference type="KEGG" id="ath:AT3G23325"/>
<dbReference type="Araport" id="AT3G23325"/>
<dbReference type="TAIR" id="AT3G23325"/>
<dbReference type="eggNOG" id="KOG3485">
    <property type="taxonomic scope" value="Eukaryota"/>
</dbReference>
<dbReference type="HOGENOM" id="CLU_138804_3_1_1"/>
<dbReference type="InParanoid" id="Q9LW64"/>
<dbReference type="OMA" id="EWALNIH"/>
<dbReference type="OrthoDB" id="274726at2759"/>
<dbReference type="PhylomeDB" id="Q9LW64"/>
<dbReference type="PRO" id="PR:Q9LW64"/>
<dbReference type="Proteomes" id="UP000006548">
    <property type="component" value="Chromosome 3"/>
</dbReference>
<dbReference type="ExpressionAtlas" id="Q9LW64">
    <property type="expression patterns" value="baseline and differential"/>
</dbReference>
<dbReference type="GO" id="GO:0000398">
    <property type="term" value="P:mRNA splicing, via spliceosome"/>
    <property type="evidence" value="ECO:0007669"/>
    <property type="project" value="InterPro"/>
</dbReference>
<dbReference type="InterPro" id="IPR009846">
    <property type="entry name" value="SF3b5/RDS3-10"/>
</dbReference>
<dbReference type="InterPro" id="IPR017089">
    <property type="entry name" value="Splicing_factor_3B_subunit_5"/>
</dbReference>
<dbReference type="PANTHER" id="PTHR20978">
    <property type="entry name" value="SPLICING FACTOR 3B SUBUNIT 5"/>
    <property type="match status" value="1"/>
</dbReference>
<dbReference type="PANTHER" id="PTHR20978:SF8">
    <property type="entry name" value="SPLICING FACTOR SUBUNIT"/>
    <property type="match status" value="1"/>
</dbReference>
<dbReference type="Pfam" id="PF07189">
    <property type="entry name" value="SF3b10"/>
    <property type="match status" value="1"/>
</dbReference>
<dbReference type="PIRSF" id="PIRSF037010">
    <property type="entry name" value="Splicing_factor_3B_subunit_5"/>
    <property type="match status" value="1"/>
</dbReference>
<protein>
    <recommendedName>
        <fullName>Uncharacterized protein At3g23325</fullName>
    </recommendedName>
</protein>
<organism>
    <name type="scientific">Arabidopsis thaliana</name>
    <name type="common">Mouse-ear cress</name>
    <dbReference type="NCBI Taxonomy" id="3702"/>
    <lineage>
        <taxon>Eukaryota</taxon>
        <taxon>Viridiplantae</taxon>
        <taxon>Streptophyta</taxon>
        <taxon>Embryophyta</taxon>
        <taxon>Tracheophyta</taxon>
        <taxon>Spermatophyta</taxon>
        <taxon>Magnoliopsida</taxon>
        <taxon>eudicotyledons</taxon>
        <taxon>Gunneridae</taxon>
        <taxon>Pentapetalae</taxon>
        <taxon>rosids</taxon>
        <taxon>malvids</taxon>
        <taxon>Brassicales</taxon>
        <taxon>Brassicaceae</taxon>
        <taxon>Camelineae</taxon>
        <taxon>Arabidopsis</taxon>
    </lineage>
</organism>
<accession>Q9LW64</accession>
<proteinExistence type="inferred from homology"/>
<feature type="chain" id="PRO_0000220760" description="Uncharacterized protein At3g23325">
    <location>
        <begin position="1"/>
        <end position="87"/>
    </location>
</feature>
<reference key="1">
    <citation type="journal article" date="2000" name="DNA Res.">
        <title>Structural analysis of Arabidopsis thaliana chromosome 3. I. Sequence features of the regions of 4,504,864 bp covered by sixty P1 and TAC clones.</title>
        <authorList>
            <person name="Sato S."/>
            <person name="Nakamura Y."/>
            <person name="Kaneko T."/>
            <person name="Katoh T."/>
            <person name="Asamizu E."/>
            <person name="Tabata S."/>
        </authorList>
    </citation>
    <scope>NUCLEOTIDE SEQUENCE [LARGE SCALE GENOMIC DNA]</scope>
    <source>
        <strain>cv. Columbia</strain>
    </source>
</reference>
<reference key="2">
    <citation type="journal article" date="2017" name="Plant J.">
        <title>Araport11: a complete reannotation of the Arabidopsis thaliana reference genome.</title>
        <authorList>
            <person name="Cheng C.Y."/>
            <person name="Krishnakumar V."/>
            <person name="Chan A.P."/>
            <person name="Thibaud-Nissen F."/>
            <person name="Schobel S."/>
            <person name="Town C.D."/>
        </authorList>
    </citation>
    <scope>GENOME REANNOTATION</scope>
    <source>
        <strain>cv. Columbia</strain>
    </source>
</reference>
<reference key="3">
    <citation type="journal article" date="2003" name="Science">
        <title>Empirical analysis of transcriptional activity in the Arabidopsis genome.</title>
        <authorList>
            <person name="Yamada K."/>
            <person name="Lim J."/>
            <person name="Dale J.M."/>
            <person name="Chen H."/>
            <person name="Shinn P."/>
            <person name="Palm C.J."/>
            <person name="Southwick A.M."/>
            <person name="Wu H.C."/>
            <person name="Kim C.J."/>
            <person name="Nguyen M."/>
            <person name="Pham P.K."/>
            <person name="Cheuk R.F."/>
            <person name="Karlin-Newmann G."/>
            <person name="Liu S.X."/>
            <person name="Lam B."/>
            <person name="Sakano H."/>
            <person name="Wu T."/>
            <person name="Yu G."/>
            <person name="Miranda M."/>
            <person name="Quach H.L."/>
            <person name="Tripp M."/>
            <person name="Chang C.H."/>
            <person name="Lee J.M."/>
            <person name="Toriumi M.J."/>
            <person name="Chan M.M."/>
            <person name="Tang C.C."/>
            <person name="Onodera C.S."/>
            <person name="Deng J.M."/>
            <person name="Akiyama K."/>
            <person name="Ansari Y."/>
            <person name="Arakawa T."/>
            <person name="Banh J."/>
            <person name="Banno F."/>
            <person name="Bowser L."/>
            <person name="Brooks S.Y."/>
            <person name="Carninci P."/>
            <person name="Chao Q."/>
            <person name="Choy N."/>
            <person name="Enju A."/>
            <person name="Goldsmith A.D."/>
            <person name="Gurjal M."/>
            <person name="Hansen N.F."/>
            <person name="Hayashizaki Y."/>
            <person name="Johnson-Hopson C."/>
            <person name="Hsuan V.W."/>
            <person name="Iida K."/>
            <person name="Karnes M."/>
            <person name="Khan S."/>
            <person name="Koesema E."/>
            <person name="Ishida J."/>
            <person name="Jiang P.X."/>
            <person name="Jones T."/>
            <person name="Kawai J."/>
            <person name="Kamiya A."/>
            <person name="Meyers C."/>
            <person name="Nakajima M."/>
            <person name="Narusaka M."/>
            <person name="Seki M."/>
            <person name="Sakurai T."/>
            <person name="Satou M."/>
            <person name="Tamse R."/>
            <person name="Vaysberg M."/>
            <person name="Wallender E.K."/>
            <person name="Wong C."/>
            <person name="Yamamura Y."/>
            <person name="Yuan S."/>
            <person name="Shinozaki K."/>
            <person name="Davis R.W."/>
            <person name="Theologis A."/>
            <person name="Ecker J.R."/>
        </authorList>
    </citation>
    <scope>NUCLEOTIDE SEQUENCE [LARGE SCALE MRNA]</scope>
    <source>
        <strain>cv. Columbia</strain>
    </source>
</reference>
<sequence>MQASDRFNINSQLEHLQAKYVGTGHADLSRFEWTVNIQRDSYASYIGHYPMLSYFAIAENESIGRERYNFMQKMLLPCGLPPEREDE</sequence>
<comment type="miscellaneous">
    <text>Was originally fused with At3g23315 to form At3g23320.</text>
</comment>
<comment type="similarity">
    <text evidence="1">Belongs to the SF3B5 family.</text>
</comment>
<evidence type="ECO:0000305" key="1"/>